<evidence type="ECO:0000250" key="1">
    <source>
        <dbReference type="UniProtKB" id="Q8TAP4"/>
    </source>
</evidence>
<evidence type="ECO:0000255" key="2">
    <source>
        <dbReference type="PROSITE-ProRule" id="PRU00125"/>
    </source>
</evidence>
<evidence type="ECO:0000269" key="3">
    <source ref="1"/>
</evidence>
<evidence type="ECO:0000303" key="4">
    <source ref="2"/>
</evidence>
<evidence type="ECO:0000305" key="5"/>
<evidence type="ECO:0000312" key="6">
    <source>
        <dbReference type="EMBL" id="AAD00763.1"/>
    </source>
</evidence>
<evidence type="ECO:0000312" key="7">
    <source>
        <dbReference type="EMBL" id="AAH79734.1"/>
    </source>
</evidence>
<name>LMO3_XENLA</name>
<comment type="alternative products">
    <event type="alternative splicing"/>
    <isoform>
        <id>Q9YH16-1</id>
        <name evidence="3">1</name>
        <sequence type="displayed"/>
    </isoform>
    <isoform>
        <id>Q9YH16-2</id>
        <name>2</name>
        <sequence type="described" ref="VSP_052675"/>
    </isoform>
</comment>
<keyword id="KW-0025">Alternative splicing</keyword>
<keyword id="KW-0440">LIM domain</keyword>
<keyword id="KW-0479">Metal-binding</keyword>
<keyword id="KW-1185">Reference proteome</keyword>
<keyword id="KW-0677">Repeat</keyword>
<keyword id="KW-0862">Zinc</keyword>
<reference evidence="5 6" key="1">
    <citation type="submission" date="1997-03" db="EMBL/GenBank/DDBJ databases">
        <title>XLMO1, a neuronal specific transcription factor.</title>
        <authorList>
            <person name="Bao J."/>
        </authorList>
    </citation>
    <scope>NUCLEOTIDE SEQUENCE [MRNA] (ISOFORM 1)</scope>
</reference>
<reference evidence="5 6" key="2">
    <citation type="submission" date="2004-08" db="EMBL/GenBank/DDBJ databases">
        <authorList>
            <consortium name="NIH - Xenopus Gene Collection (XGC) project"/>
        </authorList>
    </citation>
    <scope>NUCLEOTIDE SEQUENCE [LARGE SCALE MRNA] (ISOFORM 2)</scope>
    <source>
        <tissue evidence="7">Eye</tissue>
    </source>
</reference>
<proteinExistence type="evidence at transcript level"/>
<accession>Q9YH16</accession>
<accession>Q6AX67</accession>
<feature type="chain" id="PRO_0000318079" description="LIM domain only protein 3">
    <location>
        <begin position="1"/>
        <end position="156"/>
    </location>
</feature>
<feature type="domain" description="LIM zinc-binding 1" evidence="2">
    <location>
        <begin position="22"/>
        <end position="84"/>
    </location>
</feature>
<feature type="domain" description="LIM zinc-binding 2" evidence="2">
    <location>
        <begin position="86"/>
        <end position="148"/>
    </location>
</feature>
<feature type="splice variant" id="VSP_052675" description="In isoform 2." evidence="4">
    <location>
        <begin position="1"/>
        <end position="11"/>
    </location>
</feature>
<dbReference type="EMBL" id="U94991">
    <property type="protein sequence ID" value="AAD00763.1"/>
    <property type="molecule type" value="mRNA"/>
</dbReference>
<dbReference type="EMBL" id="BC079734">
    <property type="protein sequence ID" value="AAH79734.1"/>
    <property type="molecule type" value="mRNA"/>
</dbReference>
<dbReference type="RefSeq" id="NP_001084116.1">
    <molecule id="Q9YH16-1"/>
    <property type="nucleotide sequence ID" value="NM_001090647.1"/>
</dbReference>
<dbReference type="RefSeq" id="XP_018109683.1">
    <molecule id="Q9YH16-2"/>
    <property type="nucleotide sequence ID" value="XM_018254194.1"/>
</dbReference>
<dbReference type="SMR" id="Q9YH16"/>
<dbReference type="BioGRID" id="100636">
    <property type="interactions" value="1"/>
</dbReference>
<dbReference type="DNASU" id="399311"/>
<dbReference type="GeneID" id="399311"/>
<dbReference type="KEGG" id="xla:399311"/>
<dbReference type="AGR" id="Xenbase:XB-GENE-6254052"/>
<dbReference type="CTD" id="399311"/>
<dbReference type="Xenbase" id="XB-GENE-6254052">
    <property type="gene designation" value="lmo3.S"/>
</dbReference>
<dbReference type="OMA" id="DKMTMDG"/>
<dbReference type="OrthoDB" id="6352355at2759"/>
<dbReference type="Proteomes" id="UP000186698">
    <property type="component" value="Chromosome 3S"/>
</dbReference>
<dbReference type="Bgee" id="399311">
    <property type="expression patterns" value="Expressed in brain and 8 other cell types or tissues"/>
</dbReference>
<dbReference type="GO" id="GO:0005634">
    <property type="term" value="C:nucleus"/>
    <property type="evidence" value="ECO:0000318"/>
    <property type="project" value="GO_Central"/>
</dbReference>
<dbReference type="GO" id="GO:0140297">
    <property type="term" value="F:DNA-binding transcription factor binding"/>
    <property type="evidence" value="ECO:0000318"/>
    <property type="project" value="GO_Central"/>
</dbReference>
<dbReference type="GO" id="GO:0046872">
    <property type="term" value="F:metal ion binding"/>
    <property type="evidence" value="ECO:0007669"/>
    <property type="project" value="UniProtKB-KW"/>
</dbReference>
<dbReference type="GO" id="GO:0003713">
    <property type="term" value="F:transcription coactivator activity"/>
    <property type="evidence" value="ECO:0000318"/>
    <property type="project" value="GO_Central"/>
</dbReference>
<dbReference type="GO" id="GO:0045944">
    <property type="term" value="P:positive regulation of transcription by RNA polymerase II"/>
    <property type="evidence" value="ECO:0000318"/>
    <property type="project" value="GO_Central"/>
</dbReference>
<dbReference type="CDD" id="cd09388">
    <property type="entry name" value="LIM1_LMO1_LMO3"/>
    <property type="match status" value="1"/>
</dbReference>
<dbReference type="CDD" id="cd09389">
    <property type="entry name" value="LIM2_LMO1_LMO3"/>
    <property type="match status" value="1"/>
</dbReference>
<dbReference type="FunFam" id="2.10.110.10:FF:000015">
    <property type="entry name" value="LIM domain only 3"/>
    <property type="match status" value="1"/>
</dbReference>
<dbReference type="FunFam" id="2.10.110.10:FF:000016">
    <property type="entry name" value="LIM domain only 3"/>
    <property type="match status" value="1"/>
</dbReference>
<dbReference type="Gene3D" id="2.10.110.10">
    <property type="entry name" value="Cysteine Rich Protein"/>
    <property type="match status" value="2"/>
</dbReference>
<dbReference type="InterPro" id="IPR050945">
    <property type="entry name" value="LMO_RBTN_TF"/>
</dbReference>
<dbReference type="InterPro" id="IPR001781">
    <property type="entry name" value="Znf_LIM"/>
</dbReference>
<dbReference type="PANTHER" id="PTHR45787">
    <property type="entry name" value="LD11652P"/>
    <property type="match status" value="1"/>
</dbReference>
<dbReference type="PANTHER" id="PTHR45787:SF7">
    <property type="entry name" value="LIM DOMAIN ONLY PROTEIN 3"/>
    <property type="match status" value="1"/>
</dbReference>
<dbReference type="Pfam" id="PF00412">
    <property type="entry name" value="LIM"/>
    <property type="match status" value="2"/>
</dbReference>
<dbReference type="SMART" id="SM00132">
    <property type="entry name" value="LIM"/>
    <property type="match status" value="2"/>
</dbReference>
<dbReference type="SUPFAM" id="SSF57716">
    <property type="entry name" value="Glucocorticoid receptor-like (DNA-binding domain)"/>
    <property type="match status" value="3"/>
</dbReference>
<dbReference type="PROSITE" id="PS00478">
    <property type="entry name" value="LIM_DOMAIN_1"/>
    <property type="match status" value="2"/>
</dbReference>
<dbReference type="PROSITE" id="PS50023">
    <property type="entry name" value="LIM_DOMAIN_2"/>
    <property type="match status" value="2"/>
</dbReference>
<sequence>MHRREQSFGIQMLSVQPDTKPKGCAGCNRKIKDRYLLKALDKYWHEDCLKCACCDCRLGEVGSTLYTKANLILCRRDYLRLFGVTGNCAACSKLIPAFEMVMRAKENVYHLDCFACQLCNQRFCVGDKFFLKNNMILCQTDYEEGLMKEGYSAQVR</sequence>
<organism>
    <name type="scientific">Xenopus laevis</name>
    <name type="common">African clawed frog</name>
    <dbReference type="NCBI Taxonomy" id="8355"/>
    <lineage>
        <taxon>Eukaryota</taxon>
        <taxon>Metazoa</taxon>
        <taxon>Chordata</taxon>
        <taxon>Craniata</taxon>
        <taxon>Vertebrata</taxon>
        <taxon>Euteleostomi</taxon>
        <taxon>Amphibia</taxon>
        <taxon>Batrachia</taxon>
        <taxon>Anura</taxon>
        <taxon>Pipoidea</taxon>
        <taxon>Pipidae</taxon>
        <taxon>Xenopodinae</taxon>
        <taxon>Xenopus</taxon>
        <taxon>Xenopus</taxon>
    </lineage>
</organism>
<gene>
    <name evidence="1" type="primary">lmo3</name>
    <name evidence="6" type="synonym">lmo1</name>
</gene>
<protein>
    <recommendedName>
        <fullName>LIM domain only protein 3</fullName>
        <shortName>LMO-3</shortName>
    </recommendedName>
    <alternativeName>
        <fullName>LIM domain only protein 1</fullName>
        <shortName>LMO-1</shortName>
        <shortName>xLMO1</shortName>
    </alternativeName>
</protein>